<reference key="1">
    <citation type="journal article" date="1998" name="Science">
        <title>Genome sequence of the nematode C. elegans: a platform for investigating biology.</title>
        <authorList>
            <consortium name="The C. elegans sequencing consortium"/>
        </authorList>
    </citation>
    <scope>NUCLEOTIDE SEQUENCE [LARGE SCALE GENOMIC DNA]</scope>
    <source>
        <strain>Bristol N2</strain>
    </source>
</reference>
<reference key="2">
    <citation type="journal article" date="2005" name="Mol. Biol. Cell">
        <title>Caenorhabditis elegans decapping proteins: localization and functional analysis of Dcp1, Dcp2, and DcpS during embryogenesis.</title>
        <authorList>
            <person name="Lall S."/>
            <person name="Piano F."/>
            <person name="Davis R.E."/>
        </authorList>
    </citation>
    <scope>DISRUPTION PHENOTYPE</scope>
</reference>
<organism>
    <name type="scientific">Caenorhabditis elegans</name>
    <dbReference type="NCBI Taxonomy" id="6239"/>
    <lineage>
        <taxon>Eukaryota</taxon>
        <taxon>Metazoa</taxon>
        <taxon>Ecdysozoa</taxon>
        <taxon>Nematoda</taxon>
        <taxon>Chromadorea</taxon>
        <taxon>Rhabditida</taxon>
        <taxon>Rhabditina</taxon>
        <taxon>Rhabditomorpha</taxon>
        <taxon>Rhabditoidea</taxon>
        <taxon>Rhabditidae</taxon>
        <taxon>Peloderinae</taxon>
        <taxon>Caenorhabditis</taxon>
    </lineage>
</organism>
<dbReference type="EMBL" id="FO081318">
    <property type="protein sequence ID" value="CCD70767.1"/>
    <property type="molecule type" value="Genomic_DNA"/>
</dbReference>
<dbReference type="PIR" id="T15197">
    <property type="entry name" value="T15197"/>
</dbReference>
<dbReference type="RefSeq" id="NP_491850.2">
    <property type="nucleotide sequence ID" value="NM_059449.5"/>
</dbReference>
<dbReference type="SMR" id="O01763"/>
<dbReference type="BioGRID" id="37798">
    <property type="interactions" value="6"/>
</dbReference>
<dbReference type="ComplexPortal" id="CPX-957">
    <property type="entry name" value="Nuclear cap-binding complex"/>
</dbReference>
<dbReference type="FunCoup" id="O01763">
    <property type="interactions" value="3666"/>
</dbReference>
<dbReference type="STRING" id="6239.F37E3.1.1"/>
<dbReference type="PaxDb" id="6239-F37E3.1"/>
<dbReference type="PeptideAtlas" id="O01763"/>
<dbReference type="EnsemblMetazoa" id="F37E3.1.1">
    <property type="protein sequence ID" value="F37E3.1.1"/>
    <property type="gene ID" value="WBGene00018156"/>
</dbReference>
<dbReference type="GeneID" id="172345"/>
<dbReference type="KEGG" id="cel:CELE_F37E3.1"/>
<dbReference type="UCSC" id="F37E3.1">
    <property type="organism name" value="c. elegans"/>
</dbReference>
<dbReference type="AGR" id="WB:WBGene00018156"/>
<dbReference type="CTD" id="172345"/>
<dbReference type="WormBase" id="F37E3.1">
    <property type="protein sequence ID" value="CE29793"/>
    <property type="gene ID" value="WBGene00018156"/>
    <property type="gene designation" value="ncbp-1"/>
</dbReference>
<dbReference type="eggNOG" id="KOG1104">
    <property type="taxonomic scope" value="Eukaryota"/>
</dbReference>
<dbReference type="GeneTree" id="ENSGT00390000001733"/>
<dbReference type="HOGENOM" id="CLU_013207_0_0_1"/>
<dbReference type="InParanoid" id="O01763"/>
<dbReference type="OMA" id="AYMILEV"/>
<dbReference type="OrthoDB" id="10252707at2759"/>
<dbReference type="PhylomeDB" id="O01763"/>
<dbReference type="Reactome" id="R-CEL-111367">
    <property type="pathway name" value="SLBP independent Processing of Histone Pre-mRNAs"/>
</dbReference>
<dbReference type="Reactome" id="R-CEL-113418">
    <property type="pathway name" value="Formation of the Early Elongation Complex"/>
</dbReference>
<dbReference type="Reactome" id="R-CEL-159236">
    <property type="pathway name" value="Transport of Mature mRNA derived from an Intron-Containing Transcript"/>
</dbReference>
<dbReference type="Reactome" id="R-CEL-674695">
    <property type="pathway name" value="RNA Polymerase II Pre-transcription Events"/>
</dbReference>
<dbReference type="Reactome" id="R-CEL-6803529">
    <property type="pathway name" value="FGFR2 alternative splicing"/>
</dbReference>
<dbReference type="Reactome" id="R-CEL-6807505">
    <property type="pathway name" value="RNA polymerase II transcribes snRNA genes"/>
</dbReference>
<dbReference type="Reactome" id="R-CEL-72086">
    <property type="pathway name" value="mRNA Capping"/>
</dbReference>
<dbReference type="Reactome" id="R-CEL-72163">
    <property type="pathway name" value="mRNA Splicing - Major Pathway"/>
</dbReference>
<dbReference type="Reactome" id="R-CEL-72165">
    <property type="pathway name" value="mRNA Splicing - Minor Pathway"/>
</dbReference>
<dbReference type="Reactome" id="R-CEL-72187">
    <property type="pathway name" value="mRNA 3'-end processing"/>
</dbReference>
<dbReference type="Reactome" id="R-CEL-72203">
    <property type="pathway name" value="Processing of Capped Intron-Containing Pre-mRNA"/>
</dbReference>
<dbReference type="Reactome" id="R-CEL-73856">
    <property type="pathway name" value="RNA Polymerase II Transcription Termination"/>
</dbReference>
<dbReference type="Reactome" id="R-CEL-77588">
    <property type="pathway name" value="SLBP Dependent Processing of Replication-Dependent Histone Pre-mRNAs"/>
</dbReference>
<dbReference type="Reactome" id="R-CEL-77595">
    <property type="pathway name" value="Processing of Intronless Pre-mRNAs"/>
</dbReference>
<dbReference type="Reactome" id="R-CEL-975956">
    <property type="pathway name" value="Nonsense Mediated Decay (NMD) independent of the Exon Junction Complex (EJC)"/>
</dbReference>
<dbReference type="Reactome" id="R-CEL-975957">
    <property type="pathway name" value="Nonsense Mediated Decay (NMD) enhanced by the Exon Junction Complex (EJC)"/>
</dbReference>
<dbReference type="PRO" id="PR:O01763"/>
<dbReference type="Proteomes" id="UP000001940">
    <property type="component" value="Chromosome I"/>
</dbReference>
<dbReference type="Bgee" id="WBGene00018156">
    <property type="expression patterns" value="Expressed in embryo and 4 other cell types or tissues"/>
</dbReference>
<dbReference type="GO" id="GO:0005846">
    <property type="term" value="C:nuclear cap binding complex"/>
    <property type="evidence" value="ECO:0000318"/>
    <property type="project" value="GO_Central"/>
</dbReference>
<dbReference type="GO" id="GO:0005634">
    <property type="term" value="C:nucleus"/>
    <property type="evidence" value="ECO:0000318"/>
    <property type="project" value="GO_Central"/>
</dbReference>
<dbReference type="GO" id="GO:0003729">
    <property type="term" value="F:mRNA binding"/>
    <property type="evidence" value="ECO:0000318"/>
    <property type="project" value="GO_Central"/>
</dbReference>
<dbReference type="GO" id="GO:0000339">
    <property type="term" value="F:RNA cap binding"/>
    <property type="evidence" value="ECO:0000318"/>
    <property type="project" value="GO_Central"/>
</dbReference>
<dbReference type="GO" id="GO:0006370">
    <property type="term" value="P:7-methylguanosine mRNA capping"/>
    <property type="evidence" value="ECO:0007669"/>
    <property type="project" value="UniProtKB-KW"/>
</dbReference>
<dbReference type="GO" id="GO:0035195">
    <property type="term" value="P:miRNA-mediated post-transcriptional gene silencing"/>
    <property type="evidence" value="ECO:0000303"/>
    <property type="project" value="ComplexPortal"/>
</dbReference>
<dbReference type="GO" id="GO:0031124">
    <property type="term" value="P:mRNA 3'-end processing"/>
    <property type="evidence" value="ECO:0000303"/>
    <property type="project" value="ComplexPortal"/>
</dbReference>
<dbReference type="GO" id="GO:0006406">
    <property type="term" value="P:mRNA export from nucleus"/>
    <property type="evidence" value="ECO:0000303"/>
    <property type="project" value="ComplexPortal"/>
</dbReference>
<dbReference type="GO" id="GO:0000398">
    <property type="term" value="P:mRNA splicing, via spliceosome"/>
    <property type="evidence" value="ECO:0000303"/>
    <property type="project" value="ComplexPortal"/>
</dbReference>
<dbReference type="GO" id="GO:0042789">
    <property type="term" value="P:mRNA transcription by RNA polymerase II"/>
    <property type="evidence" value="ECO:0000303"/>
    <property type="project" value="ComplexPortal"/>
</dbReference>
<dbReference type="GO" id="GO:0000956">
    <property type="term" value="P:nuclear-transcribed mRNA catabolic process"/>
    <property type="evidence" value="ECO:0000303"/>
    <property type="project" value="ComplexPortal"/>
</dbReference>
<dbReference type="GO" id="GO:0000184">
    <property type="term" value="P:nuclear-transcribed mRNA catabolic process, nonsense-mediated decay"/>
    <property type="evidence" value="ECO:0000318"/>
    <property type="project" value="GO_Central"/>
</dbReference>
<dbReference type="GO" id="GO:0031053">
    <property type="term" value="P:primary miRNA processing"/>
    <property type="evidence" value="ECO:0000314"/>
    <property type="project" value="ComplexPortal"/>
</dbReference>
<dbReference type="FunFam" id="1.25.40.180:FF:000010">
    <property type="entry name" value="Nuclear cap-binding protein subunit 1"/>
    <property type="match status" value="1"/>
</dbReference>
<dbReference type="FunFam" id="1.25.40.180:FF:000041">
    <property type="entry name" value="Nuclear cap-binding protein subunit 1"/>
    <property type="match status" value="1"/>
</dbReference>
<dbReference type="Gene3D" id="1.25.40.180">
    <property type="match status" value="3"/>
</dbReference>
<dbReference type="InterPro" id="IPR016024">
    <property type="entry name" value="ARM-type_fold"/>
</dbReference>
<dbReference type="InterPro" id="IPR027159">
    <property type="entry name" value="CBP80"/>
</dbReference>
<dbReference type="InterPro" id="IPR015172">
    <property type="entry name" value="MIF4G-like_typ-1"/>
</dbReference>
<dbReference type="InterPro" id="IPR015174">
    <property type="entry name" value="MIF4G-like_typ-2"/>
</dbReference>
<dbReference type="InterPro" id="IPR003890">
    <property type="entry name" value="MIF4G-like_typ-3"/>
</dbReference>
<dbReference type="PANTHER" id="PTHR12412">
    <property type="entry name" value="CAP BINDING PROTEIN"/>
    <property type="match status" value="1"/>
</dbReference>
<dbReference type="PANTHER" id="PTHR12412:SF2">
    <property type="entry name" value="NUCLEAR CAP-BINDING PROTEIN SUBUNIT 1"/>
    <property type="match status" value="1"/>
</dbReference>
<dbReference type="Pfam" id="PF02854">
    <property type="entry name" value="MIF4G"/>
    <property type="match status" value="1"/>
</dbReference>
<dbReference type="Pfam" id="PF09088">
    <property type="entry name" value="MIF4G_like"/>
    <property type="match status" value="1"/>
</dbReference>
<dbReference type="Pfam" id="PF09090">
    <property type="entry name" value="MIF4G_like_2"/>
    <property type="match status" value="1"/>
</dbReference>
<dbReference type="SMART" id="SM00543">
    <property type="entry name" value="MIF4G"/>
    <property type="match status" value="1"/>
</dbReference>
<dbReference type="SUPFAM" id="SSF48371">
    <property type="entry name" value="ARM repeat"/>
    <property type="match status" value="3"/>
</dbReference>
<comment type="function">
    <text evidence="1">Component of the cap-binding complex (CBC), which binds cotranscriptionally to the 5'-cap of pre-mRNAs and is involved in various processes such as pre-mRNA splicing and RNA-mediated gene silencing (RNAi). The CBC complex is involved in miRNA-mediated RNA interference and is required for primary microRNAs (miRNAs) processing. In the CBC complex, ncbp-1 does not bind directly capped RNAs (m7GpppG-capped RNA) but is required to stabilize the movement of the N-terminal loop of ncbp-2 and lock the CBC into a high affinity cap-binding state with the cap structure (By similarity).</text>
</comment>
<comment type="subunit">
    <text evidence="1">Component of the nuclear cap-binding complex (CBC), a heterodimer composed of ncbp-1 and ncbp-1 that interacts with m7GpppG-capped RNA.</text>
</comment>
<comment type="subcellular location">
    <subcellularLocation>
        <location evidence="1">Nucleus</location>
    </subcellularLocation>
</comment>
<comment type="disruption phenotype">
    <text evidence="3">Lethality in 63% of embryos.</text>
</comment>
<comment type="similarity">
    <text evidence="4">Belongs to the NCBP1 family.</text>
</comment>
<feature type="chain" id="PRO_0000385244" description="Nuclear cap-binding protein subunit 1">
    <location>
        <begin position="1"/>
        <end position="798"/>
    </location>
</feature>
<feature type="domain" description="MIF4G">
    <location>
        <begin position="28"/>
        <end position="241"/>
    </location>
</feature>
<feature type="region of interest" description="Disordered" evidence="2">
    <location>
        <begin position="663"/>
        <end position="686"/>
    </location>
</feature>
<feature type="compositionally biased region" description="Acidic residues" evidence="2">
    <location>
        <begin position="668"/>
        <end position="682"/>
    </location>
</feature>
<name>NCBP1_CAEEL</name>
<sequence length="798" mass="92527">MSRRRQFDDEDEVQMKRRRGAPLIEDVEKKLQGVIGKVGENTGSSIECNLDKLTAFLHDDLEKYRASIIDIIAGCAIYLPNRVTVYTTLVGLLNSKNFNFGGDVVEKLISEQQDLLSKQKYQEAQNLAIFLCDLGNSGVLTAQSIGEYLESFIAAAFEENMPQVRNDYYIQTVLRCLPWIGKELTEKAPEQMENIGEAIGKYLELRNKNHVALLQVWREGSTDQKQEDYLESLSAQIEALRNADWVENHIPRHYSGFETTLQDALQHNLPSFQSPEHTSDMIYPYPLVVFRLFQDADCSAFSSKPLPGDSSIDRFLFEGEIAWIIEKNQFNRKACARELLAFAEENPSVPIGFLIFETIFGQMLRLPHAPYPAIFHCSLVLELLKLKPDDYPQILVQTVECIYRRADSMQPVCIDRMVDWFSFHLSNFQYRYTWTDWKDCLNKDAFSGSQIFVREVIEKCRRFGSYEKIIAALPQDFVKIHPCSPEVRYLIDEEDTALVQRAETFTQMFQERQPAEAFLNELKSNDENDELPYNINEFGLFVMVMLKMASKTYSHNFSALFRYQTTLKTVCDASELYQEKLLETLYSCWKTNQQMLMILTDKLLKMQVIDCSAVVGWLFDEKMWQEHDRQWLFEVLNQALEKLTRQINVVEKDIKELTEKTENKIKEEDDEESDIKMDEDETKEEKFKQDLEDLENNKEKLERMVTFQKGLFNDFLIAFIEEIKNAATSNTSEMDGSGDTPGTQTPKFMWLRGRFCHVLLAHAETLLKHSSNIADEVFSEGTDPSIIECFNQFQSLRL</sequence>
<proteinExistence type="inferred from homology"/>
<evidence type="ECO:0000250" key="1"/>
<evidence type="ECO:0000256" key="2">
    <source>
        <dbReference type="SAM" id="MobiDB-lite"/>
    </source>
</evidence>
<evidence type="ECO:0000269" key="3">
    <source>
    </source>
</evidence>
<evidence type="ECO:0000305" key="4"/>
<gene>
    <name type="primary">ncbp-1</name>
    <name type="synonym">cbp-80</name>
    <name type="ORF">F37E3.1</name>
</gene>
<keyword id="KW-0506">mRNA capping</keyword>
<keyword id="KW-0507">mRNA processing</keyword>
<keyword id="KW-0508">mRNA splicing</keyword>
<keyword id="KW-0539">Nucleus</keyword>
<keyword id="KW-1185">Reference proteome</keyword>
<keyword id="KW-0943">RNA-mediated gene silencing</keyword>
<protein>
    <recommendedName>
        <fullName>Nuclear cap-binding protein subunit 1</fullName>
    </recommendedName>
    <alternativeName>
        <fullName>80 kDa nuclear cap-binding protein</fullName>
        <shortName>CBP80</shortName>
        <shortName>NCBP 80 kDa subunit</shortName>
    </alternativeName>
</protein>
<accession>O01763</accession>